<comment type="function">
    <text evidence="1">Removes the formyl group from the N-terminal Met of newly synthesized proteins. Requires at least a dipeptide for an efficient rate of reaction. N-terminal L-methionine is a prerequisite for activity but the enzyme has broad specificity at other positions.</text>
</comment>
<comment type="catalytic activity">
    <reaction evidence="1">
        <text>N-terminal N-formyl-L-methionyl-[peptide] + H2O = N-terminal L-methionyl-[peptide] + formate</text>
        <dbReference type="Rhea" id="RHEA:24420"/>
        <dbReference type="Rhea" id="RHEA-COMP:10639"/>
        <dbReference type="Rhea" id="RHEA-COMP:10640"/>
        <dbReference type="ChEBI" id="CHEBI:15377"/>
        <dbReference type="ChEBI" id="CHEBI:15740"/>
        <dbReference type="ChEBI" id="CHEBI:49298"/>
        <dbReference type="ChEBI" id="CHEBI:64731"/>
        <dbReference type="EC" id="3.5.1.88"/>
    </reaction>
</comment>
<comment type="cofactor">
    <cofactor evidence="1">
        <name>Fe(2+)</name>
        <dbReference type="ChEBI" id="CHEBI:29033"/>
    </cofactor>
    <text evidence="1">Binds 1 Fe(2+) ion.</text>
</comment>
<comment type="similarity">
    <text evidence="1">Belongs to the polypeptide deformylase family.</text>
</comment>
<sequence>MILMKDIVRDDQEGTVLRDYAAKVSFPLTEEEQQLAKDLMEYLEISQDEELAEKYGLRAGVGLAAPQVNVSKQMAAVLVPSDDEEDDTPIFKDVIINPVIISESVQMGALTEGEGCLSVDRDIAGYVPRHDRITLKYQDVQGETHKVRLKHYPAIVCQHEIDHLHGVLFYDHINKDNPFEAPEGTVFFG</sequence>
<proteinExistence type="inferred from homology"/>
<feature type="chain" id="PRO_1000097319" description="Peptide deformylase">
    <location>
        <begin position="1"/>
        <end position="189"/>
    </location>
</feature>
<feature type="active site" evidence="1">
    <location>
        <position position="160"/>
    </location>
</feature>
<feature type="binding site" evidence="1">
    <location>
        <position position="116"/>
    </location>
    <ligand>
        <name>Fe cation</name>
        <dbReference type="ChEBI" id="CHEBI:24875"/>
    </ligand>
</feature>
<feature type="binding site" evidence="1">
    <location>
        <position position="159"/>
    </location>
    <ligand>
        <name>Fe cation</name>
        <dbReference type="ChEBI" id="CHEBI:24875"/>
    </ligand>
</feature>
<feature type="binding site" evidence="1">
    <location>
        <position position="163"/>
    </location>
    <ligand>
        <name>Fe cation</name>
        <dbReference type="ChEBI" id="CHEBI:24875"/>
    </ligand>
</feature>
<evidence type="ECO:0000255" key="1">
    <source>
        <dbReference type="HAMAP-Rule" id="MF_00163"/>
    </source>
</evidence>
<accession>B2GBA3</accession>
<keyword id="KW-0378">Hydrolase</keyword>
<keyword id="KW-0408">Iron</keyword>
<keyword id="KW-0479">Metal-binding</keyword>
<keyword id="KW-0648">Protein biosynthesis</keyword>
<keyword id="KW-1185">Reference proteome</keyword>
<gene>
    <name evidence="1" type="primary">def</name>
    <name type="ordered locus">LAF_0599</name>
</gene>
<reference key="1">
    <citation type="journal article" date="2008" name="DNA Res.">
        <title>Comparative genome analysis of Lactobacillus reuteri and Lactobacillus fermentum reveal a genomic island for reuterin and cobalamin production.</title>
        <authorList>
            <person name="Morita H."/>
            <person name="Toh H."/>
            <person name="Fukuda S."/>
            <person name="Horikawa H."/>
            <person name="Oshima K."/>
            <person name="Suzuki T."/>
            <person name="Murakami M."/>
            <person name="Hisamatsu S."/>
            <person name="Kato Y."/>
            <person name="Takizawa T."/>
            <person name="Fukuoka H."/>
            <person name="Yoshimura T."/>
            <person name="Itoh K."/>
            <person name="O'Sullivan D.J."/>
            <person name="McKay L.L."/>
            <person name="Ohno H."/>
            <person name="Kikuchi J."/>
            <person name="Masaoka T."/>
            <person name="Hattori M."/>
        </authorList>
    </citation>
    <scope>NUCLEOTIDE SEQUENCE [LARGE SCALE GENOMIC DNA]</scope>
    <source>
        <strain>NBRC 3956 / LMG 18251</strain>
    </source>
</reference>
<organism>
    <name type="scientific">Limosilactobacillus fermentum (strain NBRC 3956 / LMG 18251)</name>
    <name type="common">Lactobacillus fermentum</name>
    <dbReference type="NCBI Taxonomy" id="334390"/>
    <lineage>
        <taxon>Bacteria</taxon>
        <taxon>Bacillati</taxon>
        <taxon>Bacillota</taxon>
        <taxon>Bacilli</taxon>
        <taxon>Lactobacillales</taxon>
        <taxon>Lactobacillaceae</taxon>
        <taxon>Limosilactobacillus</taxon>
    </lineage>
</organism>
<protein>
    <recommendedName>
        <fullName evidence="1">Peptide deformylase</fullName>
        <shortName evidence="1">PDF</shortName>
        <ecNumber evidence="1">3.5.1.88</ecNumber>
    </recommendedName>
    <alternativeName>
        <fullName evidence="1">Polypeptide deformylase</fullName>
    </alternativeName>
</protein>
<name>DEF_LIMF3</name>
<dbReference type="EC" id="3.5.1.88" evidence="1"/>
<dbReference type="EMBL" id="AP008937">
    <property type="protein sequence ID" value="BAG26935.1"/>
    <property type="molecule type" value="Genomic_DNA"/>
</dbReference>
<dbReference type="RefSeq" id="WP_003686366.1">
    <property type="nucleotide sequence ID" value="NC_010610.1"/>
</dbReference>
<dbReference type="SMR" id="B2GBA3"/>
<dbReference type="GeneID" id="83715067"/>
<dbReference type="KEGG" id="lfe:LAF_0599"/>
<dbReference type="eggNOG" id="COG0242">
    <property type="taxonomic scope" value="Bacteria"/>
</dbReference>
<dbReference type="HOGENOM" id="CLU_061901_4_0_9"/>
<dbReference type="Proteomes" id="UP000001697">
    <property type="component" value="Chromosome"/>
</dbReference>
<dbReference type="GO" id="GO:0046872">
    <property type="term" value="F:metal ion binding"/>
    <property type="evidence" value="ECO:0007669"/>
    <property type="project" value="UniProtKB-KW"/>
</dbReference>
<dbReference type="GO" id="GO:0042586">
    <property type="term" value="F:peptide deformylase activity"/>
    <property type="evidence" value="ECO:0007669"/>
    <property type="project" value="UniProtKB-UniRule"/>
</dbReference>
<dbReference type="GO" id="GO:0043686">
    <property type="term" value="P:co-translational protein modification"/>
    <property type="evidence" value="ECO:0007669"/>
    <property type="project" value="TreeGrafter"/>
</dbReference>
<dbReference type="GO" id="GO:0006412">
    <property type="term" value="P:translation"/>
    <property type="evidence" value="ECO:0007669"/>
    <property type="project" value="UniProtKB-UniRule"/>
</dbReference>
<dbReference type="CDD" id="cd00487">
    <property type="entry name" value="Pep_deformylase"/>
    <property type="match status" value="1"/>
</dbReference>
<dbReference type="FunFam" id="3.90.45.10:FF:000002">
    <property type="entry name" value="Peptide deformylase"/>
    <property type="match status" value="1"/>
</dbReference>
<dbReference type="Gene3D" id="3.90.45.10">
    <property type="entry name" value="Peptide deformylase"/>
    <property type="match status" value="1"/>
</dbReference>
<dbReference type="HAMAP" id="MF_00163">
    <property type="entry name" value="Pep_deformylase"/>
    <property type="match status" value="1"/>
</dbReference>
<dbReference type="InterPro" id="IPR023635">
    <property type="entry name" value="Peptide_deformylase"/>
</dbReference>
<dbReference type="InterPro" id="IPR036821">
    <property type="entry name" value="Peptide_deformylase_sf"/>
</dbReference>
<dbReference type="NCBIfam" id="TIGR00079">
    <property type="entry name" value="pept_deformyl"/>
    <property type="match status" value="1"/>
</dbReference>
<dbReference type="PANTHER" id="PTHR10458">
    <property type="entry name" value="PEPTIDE DEFORMYLASE"/>
    <property type="match status" value="1"/>
</dbReference>
<dbReference type="PANTHER" id="PTHR10458:SF8">
    <property type="entry name" value="PEPTIDE DEFORMYLASE 2"/>
    <property type="match status" value="1"/>
</dbReference>
<dbReference type="Pfam" id="PF01327">
    <property type="entry name" value="Pep_deformylase"/>
    <property type="match status" value="1"/>
</dbReference>
<dbReference type="PIRSF" id="PIRSF004749">
    <property type="entry name" value="Pep_def"/>
    <property type="match status" value="1"/>
</dbReference>
<dbReference type="PRINTS" id="PR01576">
    <property type="entry name" value="PDEFORMYLASE"/>
</dbReference>
<dbReference type="SUPFAM" id="SSF56420">
    <property type="entry name" value="Peptide deformylase"/>
    <property type="match status" value="1"/>
</dbReference>